<comment type="function">
    <text evidence="2">With S4 and S5 plays an important role in translational accuracy.</text>
</comment>
<comment type="function">
    <text evidence="2">Interacts with and stabilizes bases of the 16S rRNA that are involved in tRNA selection in the A site and with the mRNA backbone. Located at the interface of the 30S and 50S subunits, it traverses the body of the 30S subunit contacting proteins on the other side and probably holding the rRNA structure together. The combined cluster of proteins S8, S12 and S17 appears to hold together the shoulder and platform of the 30S subunit.</text>
</comment>
<comment type="subunit">
    <text evidence="2">Part of the 30S ribosomal subunit. Contacts proteins S8 and S17. May interact with IF1 in the 30S initiation complex.</text>
</comment>
<comment type="similarity">
    <text evidence="2">Belongs to the universal ribosomal protein uS12 family.</text>
</comment>
<protein>
    <recommendedName>
        <fullName evidence="2">Small ribosomal subunit protein uS12</fullName>
    </recommendedName>
    <alternativeName>
        <fullName evidence="4">30S ribosomal protein S12</fullName>
    </alternativeName>
</protein>
<dbReference type="EMBL" id="CP001047">
    <property type="protein sequence ID" value="ACF07203.1"/>
    <property type="molecule type" value="Genomic_DNA"/>
</dbReference>
<dbReference type="RefSeq" id="WP_012498160.1">
    <property type="nucleotide sequence ID" value="NC_011025.1"/>
</dbReference>
<dbReference type="SMR" id="B3PMF1"/>
<dbReference type="STRING" id="243272.MARTH_orf315"/>
<dbReference type="KEGG" id="mat:MARTH_orf315"/>
<dbReference type="eggNOG" id="COG0048">
    <property type="taxonomic scope" value="Bacteria"/>
</dbReference>
<dbReference type="HOGENOM" id="CLU_104295_1_2_14"/>
<dbReference type="Proteomes" id="UP000008812">
    <property type="component" value="Chromosome"/>
</dbReference>
<dbReference type="GO" id="GO:0015935">
    <property type="term" value="C:small ribosomal subunit"/>
    <property type="evidence" value="ECO:0007669"/>
    <property type="project" value="InterPro"/>
</dbReference>
<dbReference type="GO" id="GO:0019843">
    <property type="term" value="F:rRNA binding"/>
    <property type="evidence" value="ECO:0007669"/>
    <property type="project" value="UniProtKB-UniRule"/>
</dbReference>
<dbReference type="GO" id="GO:0003735">
    <property type="term" value="F:structural constituent of ribosome"/>
    <property type="evidence" value="ECO:0007669"/>
    <property type="project" value="InterPro"/>
</dbReference>
<dbReference type="GO" id="GO:0000049">
    <property type="term" value="F:tRNA binding"/>
    <property type="evidence" value="ECO:0007669"/>
    <property type="project" value="UniProtKB-UniRule"/>
</dbReference>
<dbReference type="GO" id="GO:0006412">
    <property type="term" value="P:translation"/>
    <property type="evidence" value="ECO:0007669"/>
    <property type="project" value="UniProtKB-UniRule"/>
</dbReference>
<dbReference type="CDD" id="cd03368">
    <property type="entry name" value="Ribosomal_S12"/>
    <property type="match status" value="1"/>
</dbReference>
<dbReference type="FunFam" id="2.40.50.140:FF:000099">
    <property type="entry name" value="Ribosomal protein S12, mitochondrial"/>
    <property type="match status" value="1"/>
</dbReference>
<dbReference type="Gene3D" id="2.40.50.140">
    <property type="entry name" value="Nucleic acid-binding proteins"/>
    <property type="match status" value="1"/>
</dbReference>
<dbReference type="HAMAP" id="MF_00403_B">
    <property type="entry name" value="Ribosomal_uS12_B"/>
    <property type="match status" value="1"/>
</dbReference>
<dbReference type="InterPro" id="IPR012340">
    <property type="entry name" value="NA-bd_OB-fold"/>
</dbReference>
<dbReference type="InterPro" id="IPR006032">
    <property type="entry name" value="Ribosomal_uS12"/>
</dbReference>
<dbReference type="InterPro" id="IPR005679">
    <property type="entry name" value="Ribosomal_uS12_bac"/>
</dbReference>
<dbReference type="NCBIfam" id="TIGR00981">
    <property type="entry name" value="rpsL_bact"/>
    <property type="match status" value="1"/>
</dbReference>
<dbReference type="PANTHER" id="PTHR11652">
    <property type="entry name" value="30S RIBOSOMAL PROTEIN S12 FAMILY MEMBER"/>
    <property type="match status" value="1"/>
</dbReference>
<dbReference type="Pfam" id="PF00164">
    <property type="entry name" value="Ribosom_S12_S23"/>
    <property type="match status" value="1"/>
</dbReference>
<dbReference type="PRINTS" id="PR01034">
    <property type="entry name" value="RIBOSOMALS12"/>
</dbReference>
<dbReference type="SUPFAM" id="SSF50249">
    <property type="entry name" value="Nucleic acid-binding proteins"/>
    <property type="match status" value="1"/>
</dbReference>
<dbReference type="PROSITE" id="PS00055">
    <property type="entry name" value="RIBOSOMAL_S12"/>
    <property type="match status" value="1"/>
</dbReference>
<keyword id="KW-0488">Methylation</keyword>
<keyword id="KW-1185">Reference proteome</keyword>
<keyword id="KW-0687">Ribonucleoprotein</keyword>
<keyword id="KW-0689">Ribosomal protein</keyword>
<keyword id="KW-0694">RNA-binding</keyword>
<keyword id="KW-0699">rRNA-binding</keyword>
<keyword id="KW-0820">tRNA-binding</keyword>
<sequence length="138" mass="15185">MPTISQLINHGRSAKTSKSKAPALGMMFNSLQKKENKIPSPFKRGVCTRVATMTPKKPNSAIRKYARVRLSNGQEVTAYIPGEGHNLQEHSVVLIRGGKVKDLPGVRYTIVRGTQDAAGVDKRKQGRSIYGTKKPKEN</sequence>
<gene>
    <name evidence="2" type="primary">rpsL</name>
    <name type="ordered locus">MARTH_orf315</name>
</gene>
<reference key="1">
    <citation type="journal article" date="2008" name="Infect. Immun.">
        <title>Genome of Mycoplasma arthritidis.</title>
        <authorList>
            <person name="Dybvig K."/>
            <person name="Zuhua C."/>
            <person name="Lao P."/>
            <person name="Jordan D.S."/>
            <person name="French C.T."/>
            <person name="Tu A.H."/>
            <person name="Loraine A.E."/>
        </authorList>
    </citation>
    <scope>NUCLEOTIDE SEQUENCE [LARGE SCALE GENOMIC DNA]</scope>
    <source>
        <strain>158L3-1</strain>
    </source>
</reference>
<accession>B3PMF1</accession>
<name>RS12_META1</name>
<proteinExistence type="inferred from homology"/>
<feature type="chain" id="PRO_1000194197" description="Small ribosomal subunit protein uS12">
    <location>
        <begin position="1"/>
        <end position="138"/>
    </location>
</feature>
<feature type="region of interest" description="Disordered" evidence="3">
    <location>
        <begin position="1"/>
        <end position="20"/>
    </location>
</feature>
<feature type="region of interest" description="Disordered" evidence="3">
    <location>
        <begin position="116"/>
        <end position="138"/>
    </location>
</feature>
<feature type="modified residue" description="3-methylthioaspartic acid" evidence="1">
    <location>
        <position position="102"/>
    </location>
</feature>
<evidence type="ECO:0000250" key="1"/>
<evidence type="ECO:0000255" key="2">
    <source>
        <dbReference type="HAMAP-Rule" id="MF_00403"/>
    </source>
</evidence>
<evidence type="ECO:0000256" key="3">
    <source>
        <dbReference type="SAM" id="MobiDB-lite"/>
    </source>
</evidence>
<evidence type="ECO:0000305" key="4"/>
<organism>
    <name type="scientific">Metamycoplasma arthritidis (strain 158L3-1)</name>
    <name type="common">Mycoplasma arthritidis</name>
    <dbReference type="NCBI Taxonomy" id="243272"/>
    <lineage>
        <taxon>Bacteria</taxon>
        <taxon>Bacillati</taxon>
        <taxon>Mycoplasmatota</taxon>
        <taxon>Mycoplasmoidales</taxon>
        <taxon>Metamycoplasmataceae</taxon>
        <taxon>Metamycoplasma</taxon>
    </lineage>
</organism>